<comment type="function">
    <text evidence="1">Binds directly to 16S ribosomal RNA.</text>
</comment>
<comment type="similarity">
    <text evidence="1">Belongs to the bacterial ribosomal protein bS20 family.</text>
</comment>
<proteinExistence type="inferred from homology"/>
<organism>
    <name type="scientific">Campylobacter concisus (strain 13826)</name>
    <dbReference type="NCBI Taxonomy" id="360104"/>
    <lineage>
        <taxon>Bacteria</taxon>
        <taxon>Pseudomonadati</taxon>
        <taxon>Campylobacterota</taxon>
        <taxon>Epsilonproteobacteria</taxon>
        <taxon>Campylobacterales</taxon>
        <taxon>Campylobacteraceae</taxon>
        <taxon>Campylobacter</taxon>
    </lineage>
</organism>
<feature type="chain" id="PRO_1000014564" description="Small ribosomal subunit protein bS20">
    <location>
        <begin position="1"/>
        <end position="89"/>
    </location>
</feature>
<feature type="region of interest" description="Disordered" evidence="2">
    <location>
        <begin position="1"/>
        <end position="20"/>
    </location>
</feature>
<protein>
    <recommendedName>
        <fullName evidence="1">Small ribosomal subunit protein bS20</fullName>
    </recommendedName>
    <alternativeName>
        <fullName evidence="3">30S ribosomal protein S20</fullName>
    </alternativeName>
</protein>
<sequence length="89" mass="10118">MANHKSAEKRARQTIKRTERNRFYRTRLKNITKAVRVAVEAKDLNAANEALKVANKSIHSFVSRGFLKKQTAARRVSRLAQLVNTLKAA</sequence>
<evidence type="ECO:0000255" key="1">
    <source>
        <dbReference type="HAMAP-Rule" id="MF_00500"/>
    </source>
</evidence>
<evidence type="ECO:0000256" key="2">
    <source>
        <dbReference type="SAM" id="MobiDB-lite"/>
    </source>
</evidence>
<evidence type="ECO:0000305" key="3"/>
<accession>A7ZB09</accession>
<reference key="1">
    <citation type="submission" date="2007-10" db="EMBL/GenBank/DDBJ databases">
        <title>Genome sequence of Campylobacter concisus 13826 isolated from human feces.</title>
        <authorList>
            <person name="Fouts D.E."/>
            <person name="Mongodin E.F."/>
            <person name="Puiu D."/>
            <person name="Sebastian Y."/>
            <person name="Miller W.G."/>
            <person name="Mandrell R.E."/>
            <person name="On S."/>
            <person name="Nelson K.E."/>
        </authorList>
    </citation>
    <scope>NUCLEOTIDE SEQUENCE [LARGE SCALE GENOMIC DNA]</scope>
    <source>
        <strain>13826</strain>
    </source>
</reference>
<gene>
    <name evidence="1" type="primary">rpsT</name>
    <name type="ordered locus">Ccon26_00460</name>
    <name type="ORF">CCC13826_1806</name>
</gene>
<keyword id="KW-0687">Ribonucleoprotein</keyword>
<keyword id="KW-0689">Ribosomal protein</keyword>
<keyword id="KW-0694">RNA-binding</keyword>
<keyword id="KW-0699">rRNA-binding</keyword>
<name>RS20_CAMC1</name>
<dbReference type="EMBL" id="CP000792">
    <property type="protein sequence ID" value="EAT99052.1"/>
    <property type="molecule type" value="Genomic_DNA"/>
</dbReference>
<dbReference type="RefSeq" id="WP_004317319.1">
    <property type="nucleotide sequence ID" value="NC_009802.2"/>
</dbReference>
<dbReference type="SMR" id="A7ZB09"/>
<dbReference type="STRING" id="360104.CCC13826_1806"/>
<dbReference type="GeneID" id="28661822"/>
<dbReference type="KEGG" id="cco:CCC13826_1806"/>
<dbReference type="eggNOG" id="COG0268">
    <property type="taxonomic scope" value="Bacteria"/>
</dbReference>
<dbReference type="HOGENOM" id="CLU_160655_3_0_7"/>
<dbReference type="OrthoDB" id="9807974at2"/>
<dbReference type="Proteomes" id="UP000001121">
    <property type="component" value="Chromosome"/>
</dbReference>
<dbReference type="GO" id="GO:0005829">
    <property type="term" value="C:cytosol"/>
    <property type="evidence" value="ECO:0007669"/>
    <property type="project" value="TreeGrafter"/>
</dbReference>
<dbReference type="GO" id="GO:0015935">
    <property type="term" value="C:small ribosomal subunit"/>
    <property type="evidence" value="ECO:0007669"/>
    <property type="project" value="TreeGrafter"/>
</dbReference>
<dbReference type="GO" id="GO:0070181">
    <property type="term" value="F:small ribosomal subunit rRNA binding"/>
    <property type="evidence" value="ECO:0007669"/>
    <property type="project" value="TreeGrafter"/>
</dbReference>
<dbReference type="GO" id="GO:0003735">
    <property type="term" value="F:structural constituent of ribosome"/>
    <property type="evidence" value="ECO:0007669"/>
    <property type="project" value="InterPro"/>
</dbReference>
<dbReference type="GO" id="GO:0006412">
    <property type="term" value="P:translation"/>
    <property type="evidence" value="ECO:0007669"/>
    <property type="project" value="UniProtKB-UniRule"/>
</dbReference>
<dbReference type="FunFam" id="1.20.58.110:FF:000001">
    <property type="entry name" value="30S ribosomal protein S20"/>
    <property type="match status" value="1"/>
</dbReference>
<dbReference type="Gene3D" id="1.20.58.110">
    <property type="entry name" value="Ribosomal protein S20"/>
    <property type="match status" value="1"/>
</dbReference>
<dbReference type="HAMAP" id="MF_00500">
    <property type="entry name" value="Ribosomal_bS20"/>
    <property type="match status" value="1"/>
</dbReference>
<dbReference type="InterPro" id="IPR002583">
    <property type="entry name" value="Ribosomal_bS20"/>
</dbReference>
<dbReference type="InterPro" id="IPR036510">
    <property type="entry name" value="Ribosomal_bS20_sf"/>
</dbReference>
<dbReference type="NCBIfam" id="TIGR00029">
    <property type="entry name" value="S20"/>
    <property type="match status" value="1"/>
</dbReference>
<dbReference type="PANTHER" id="PTHR33398">
    <property type="entry name" value="30S RIBOSOMAL PROTEIN S20"/>
    <property type="match status" value="1"/>
</dbReference>
<dbReference type="PANTHER" id="PTHR33398:SF1">
    <property type="entry name" value="SMALL RIBOSOMAL SUBUNIT PROTEIN BS20C"/>
    <property type="match status" value="1"/>
</dbReference>
<dbReference type="Pfam" id="PF01649">
    <property type="entry name" value="Ribosomal_S20p"/>
    <property type="match status" value="1"/>
</dbReference>
<dbReference type="SUPFAM" id="SSF46992">
    <property type="entry name" value="Ribosomal protein S20"/>
    <property type="match status" value="1"/>
</dbReference>